<protein>
    <recommendedName>
        <fullName evidence="1">Proline--tRNA ligase</fullName>
        <ecNumber evidence="1">6.1.1.15</ecNumber>
    </recommendedName>
    <alternativeName>
        <fullName evidence="1">Prolyl-tRNA synthetase</fullName>
        <shortName evidence="1">ProRS</shortName>
    </alternativeName>
</protein>
<evidence type="ECO:0000255" key="1">
    <source>
        <dbReference type="HAMAP-Rule" id="MF_01569"/>
    </source>
</evidence>
<organism>
    <name type="scientific">Bacillus anthracis (strain CDC 684 / NRRL 3495)</name>
    <dbReference type="NCBI Taxonomy" id="568206"/>
    <lineage>
        <taxon>Bacteria</taxon>
        <taxon>Bacillati</taxon>
        <taxon>Bacillota</taxon>
        <taxon>Bacilli</taxon>
        <taxon>Bacillales</taxon>
        <taxon>Bacillaceae</taxon>
        <taxon>Bacillus</taxon>
        <taxon>Bacillus cereus group</taxon>
    </lineage>
</organism>
<comment type="function">
    <text evidence="1">Catalyzes the attachment of proline to tRNA(Pro) in a two-step reaction: proline is first activated by ATP to form Pro-AMP and then transferred to the acceptor end of tRNA(Pro). As ProRS can inadvertently accommodate and process non-cognate amino acids such as alanine and cysteine, to avoid such errors it has two additional distinct editing activities against alanine. One activity is designated as 'pretransfer' editing and involves the tRNA(Pro)-independent hydrolysis of activated Ala-AMP. The other activity is designated 'posttransfer' editing and involves deacylation of mischarged Ala-tRNA(Pro). The misacylated Cys-tRNA(Pro) is not edited by ProRS.</text>
</comment>
<comment type="catalytic activity">
    <reaction evidence="1">
        <text>tRNA(Pro) + L-proline + ATP = L-prolyl-tRNA(Pro) + AMP + diphosphate</text>
        <dbReference type="Rhea" id="RHEA:14305"/>
        <dbReference type="Rhea" id="RHEA-COMP:9700"/>
        <dbReference type="Rhea" id="RHEA-COMP:9702"/>
        <dbReference type="ChEBI" id="CHEBI:30616"/>
        <dbReference type="ChEBI" id="CHEBI:33019"/>
        <dbReference type="ChEBI" id="CHEBI:60039"/>
        <dbReference type="ChEBI" id="CHEBI:78442"/>
        <dbReference type="ChEBI" id="CHEBI:78532"/>
        <dbReference type="ChEBI" id="CHEBI:456215"/>
        <dbReference type="EC" id="6.1.1.15"/>
    </reaction>
</comment>
<comment type="subunit">
    <text evidence="1">Homodimer.</text>
</comment>
<comment type="subcellular location">
    <subcellularLocation>
        <location evidence="1">Cytoplasm</location>
    </subcellularLocation>
</comment>
<comment type="domain">
    <text evidence="1">Consists of three domains: the N-terminal catalytic domain, the editing domain and the C-terminal anticodon-binding domain.</text>
</comment>
<comment type="similarity">
    <text evidence="1">Belongs to the class-II aminoacyl-tRNA synthetase family. ProS type 1 subfamily.</text>
</comment>
<gene>
    <name evidence="1" type="primary">proS</name>
    <name type="ordered locus">BAMEG_0675</name>
</gene>
<sequence>MKQSMVFSPTLREVPADAEIKSHQLLLRAGFMRQNASGIYSFLPFGLKVLHKVERIVREEMERAGAVELLMPAMQAAELWQESGRWYSYGSELMRMKDRNAREFALGATHEEVITDLVRDEVKSYKKLPLTLYQIQTKFRDEQRPRFGLLRGREFLMKDAYSFHATQESLDEVYDRLYKAYSNIFARCGLNFRAVIADSGAMGGKDTHEFMVLSDVGEDTIAYSDTSDYAANIEMAPVVATYTKSDEAEKELEKVATPDQKAIEEVSAFLNIEADKCIKSMVFKVDEKLVVVLVRGDHEVNDVKVKNVYGASVVELASHEEVKELLNCEVGSLGPIGVNGDIEIIADHAVASIVNGCSGANEEGFHYVNVNPERDFKVSQYTDLRFIQEGDQSPDGNGTILFARGIEVGHVFKLGTRYSEAMNATFLDENGKTQPLIMGCYGIGVSRTVAAIAEQFNDENGLVWPKAVAPFHVHVIPVNMKSDAQREMGENIYNSLQEQGYEVLLDDRAERAGVKFADADLFGLPVRVTVGKKADEGIVEVKVRATGESEEVKVEELQTYIANILK</sequence>
<proteinExistence type="inferred from homology"/>
<feature type="chain" id="PRO_1000185485" description="Proline--tRNA ligase">
    <location>
        <begin position="1"/>
        <end position="566"/>
    </location>
</feature>
<reference key="1">
    <citation type="submission" date="2008-10" db="EMBL/GenBank/DDBJ databases">
        <title>Genome sequence of Bacillus anthracis str. CDC 684.</title>
        <authorList>
            <person name="Dodson R.J."/>
            <person name="Munk A.C."/>
            <person name="Brettin T."/>
            <person name="Bruce D."/>
            <person name="Detter C."/>
            <person name="Tapia R."/>
            <person name="Han C."/>
            <person name="Sutton G."/>
            <person name="Sims D."/>
        </authorList>
    </citation>
    <scope>NUCLEOTIDE SEQUENCE [LARGE SCALE GENOMIC DNA]</scope>
    <source>
        <strain>CDC 684 / NRRL 3495</strain>
    </source>
</reference>
<keyword id="KW-0030">Aminoacyl-tRNA synthetase</keyword>
<keyword id="KW-0067">ATP-binding</keyword>
<keyword id="KW-0963">Cytoplasm</keyword>
<keyword id="KW-0436">Ligase</keyword>
<keyword id="KW-0547">Nucleotide-binding</keyword>
<keyword id="KW-0648">Protein biosynthesis</keyword>
<name>SYP_BACAC</name>
<dbReference type="EC" id="6.1.1.15" evidence="1"/>
<dbReference type="EMBL" id="CP001215">
    <property type="protein sequence ID" value="ACP17353.1"/>
    <property type="molecule type" value="Genomic_DNA"/>
</dbReference>
<dbReference type="RefSeq" id="WP_000814312.1">
    <property type="nucleotide sequence ID" value="NC_012581.1"/>
</dbReference>
<dbReference type="SMR" id="C3L7A8"/>
<dbReference type="KEGG" id="bah:BAMEG_0675"/>
<dbReference type="HOGENOM" id="CLU_016739_0_0_9"/>
<dbReference type="GO" id="GO:0005829">
    <property type="term" value="C:cytosol"/>
    <property type="evidence" value="ECO:0007669"/>
    <property type="project" value="TreeGrafter"/>
</dbReference>
<dbReference type="GO" id="GO:0002161">
    <property type="term" value="F:aminoacyl-tRNA deacylase activity"/>
    <property type="evidence" value="ECO:0007669"/>
    <property type="project" value="InterPro"/>
</dbReference>
<dbReference type="GO" id="GO:0005524">
    <property type="term" value="F:ATP binding"/>
    <property type="evidence" value="ECO:0007669"/>
    <property type="project" value="UniProtKB-UniRule"/>
</dbReference>
<dbReference type="GO" id="GO:0140096">
    <property type="term" value="F:catalytic activity, acting on a protein"/>
    <property type="evidence" value="ECO:0007669"/>
    <property type="project" value="UniProtKB-ARBA"/>
</dbReference>
<dbReference type="GO" id="GO:0004827">
    <property type="term" value="F:proline-tRNA ligase activity"/>
    <property type="evidence" value="ECO:0007669"/>
    <property type="project" value="UniProtKB-UniRule"/>
</dbReference>
<dbReference type="GO" id="GO:0016740">
    <property type="term" value="F:transferase activity"/>
    <property type="evidence" value="ECO:0007669"/>
    <property type="project" value="UniProtKB-ARBA"/>
</dbReference>
<dbReference type="GO" id="GO:0006433">
    <property type="term" value="P:prolyl-tRNA aminoacylation"/>
    <property type="evidence" value="ECO:0007669"/>
    <property type="project" value="UniProtKB-UniRule"/>
</dbReference>
<dbReference type="CDD" id="cd04334">
    <property type="entry name" value="ProRS-INS"/>
    <property type="match status" value="1"/>
</dbReference>
<dbReference type="CDD" id="cd00861">
    <property type="entry name" value="ProRS_anticodon_short"/>
    <property type="match status" value="1"/>
</dbReference>
<dbReference type="CDD" id="cd00779">
    <property type="entry name" value="ProRS_core_prok"/>
    <property type="match status" value="1"/>
</dbReference>
<dbReference type="FunFam" id="3.30.930.10:FF:000043">
    <property type="entry name" value="Proline--tRNA ligase"/>
    <property type="match status" value="1"/>
</dbReference>
<dbReference type="FunFam" id="3.30.930.10:FF:000065">
    <property type="entry name" value="Proline--tRNA ligase"/>
    <property type="match status" value="1"/>
</dbReference>
<dbReference type="FunFam" id="3.40.50.800:FF:000011">
    <property type="entry name" value="Proline--tRNA ligase"/>
    <property type="match status" value="1"/>
</dbReference>
<dbReference type="Gene3D" id="3.40.50.800">
    <property type="entry name" value="Anticodon-binding domain"/>
    <property type="match status" value="1"/>
</dbReference>
<dbReference type="Gene3D" id="3.30.930.10">
    <property type="entry name" value="Bira Bifunctional Protein, Domain 2"/>
    <property type="match status" value="2"/>
</dbReference>
<dbReference type="HAMAP" id="MF_01569">
    <property type="entry name" value="Pro_tRNA_synth_type1"/>
    <property type="match status" value="1"/>
</dbReference>
<dbReference type="InterPro" id="IPR002314">
    <property type="entry name" value="aa-tRNA-synt_IIb"/>
</dbReference>
<dbReference type="InterPro" id="IPR006195">
    <property type="entry name" value="aa-tRNA-synth_II"/>
</dbReference>
<dbReference type="InterPro" id="IPR045864">
    <property type="entry name" value="aa-tRNA-synth_II/BPL/LPL"/>
</dbReference>
<dbReference type="InterPro" id="IPR004154">
    <property type="entry name" value="Anticodon-bd"/>
</dbReference>
<dbReference type="InterPro" id="IPR036621">
    <property type="entry name" value="Anticodon-bd_dom_sf"/>
</dbReference>
<dbReference type="InterPro" id="IPR002316">
    <property type="entry name" value="Pro-tRNA-ligase_IIa"/>
</dbReference>
<dbReference type="InterPro" id="IPR004500">
    <property type="entry name" value="Pro-tRNA-synth_IIa_bac-type"/>
</dbReference>
<dbReference type="InterPro" id="IPR023717">
    <property type="entry name" value="Pro-tRNA-Synthase_IIa_type1"/>
</dbReference>
<dbReference type="InterPro" id="IPR050062">
    <property type="entry name" value="Pro-tRNA_synthetase"/>
</dbReference>
<dbReference type="InterPro" id="IPR044140">
    <property type="entry name" value="ProRS_anticodon_short"/>
</dbReference>
<dbReference type="InterPro" id="IPR033730">
    <property type="entry name" value="ProRS_core_prok"/>
</dbReference>
<dbReference type="InterPro" id="IPR036754">
    <property type="entry name" value="YbaK/aa-tRNA-synt-asso_dom_sf"/>
</dbReference>
<dbReference type="InterPro" id="IPR007214">
    <property type="entry name" value="YbaK/aa-tRNA-synth-assoc-dom"/>
</dbReference>
<dbReference type="NCBIfam" id="NF006625">
    <property type="entry name" value="PRK09194.1"/>
    <property type="match status" value="1"/>
</dbReference>
<dbReference type="NCBIfam" id="TIGR00409">
    <property type="entry name" value="proS_fam_II"/>
    <property type="match status" value="1"/>
</dbReference>
<dbReference type="PANTHER" id="PTHR42753">
    <property type="entry name" value="MITOCHONDRIAL RIBOSOME PROTEIN L39/PROLYL-TRNA LIGASE FAMILY MEMBER"/>
    <property type="match status" value="1"/>
</dbReference>
<dbReference type="PANTHER" id="PTHR42753:SF2">
    <property type="entry name" value="PROLINE--TRNA LIGASE"/>
    <property type="match status" value="1"/>
</dbReference>
<dbReference type="Pfam" id="PF03129">
    <property type="entry name" value="HGTP_anticodon"/>
    <property type="match status" value="1"/>
</dbReference>
<dbReference type="Pfam" id="PF00587">
    <property type="entry name" value="tRNA-synt_2b"/>
    <property type="match status" value="1"/>
</dbReference>
<dbReference type="Pfam" id="PF04073">
    <property type="entry name" value="tRNA_edit"/>
    <property type="match status" value="1"/>
</dbReference>
<dbReference type="PIRSF" id="PIRSF001535">
    <property type="entry name" value="ProRS_1"/>
    <property type="match status" value="1"/>
</dbReference>
<dbReference type="PRINTS" id="PR01046">
    <property type="entry name" value="TRNASYNTHPRO"/>
</dbReference>
<dbReference type="SUPFAM" id="SSF52954">
    <property type="entry name" value="Class II aaRS ABD-related"/>
    <property type="match status" value="1"/>
</dbReference>
<dbReference type="SUPFAM" id="SSF55681">
    <property type="entry name" value="Class II aaRS and biotin synthetases"/>
    <property type="match status" value="1"/>
</dbReference>
<dbReference type="SUPFAM" id="SSF55826">
    <property type="entry name" value="YbaK/ProRS associated domain"/>
    <property type="match status" value="1"/>
</dbReference>
<dbReference type="PROSITE" id="PS50862">
    <property type="entry name" value="AA_TRNA_LIGASE_II"/>
    <property type="match status" value="1"/>
</dbReference>
<accession>C3L7A8</accession>